<sequence>MWELVALLLLTLAYLFWPKRRCPGAKYPKSLLSLPLVGSLPFLPRHGHMHNNFFKLQKKYGPIYSVRMGTKTTVIVGHHQLAKEVLIKKGKDFSGRPQVTTLDILSNNRKGIAFADYGAHWQLHRRLAMATFALFKDGDQKLEKIICQEISTLCDMLATHNGQTIDISFPVFVAITNVISLICFNISYKNGDPELKIVHNYNEGIIDSLGKESLVDLFPWLKVFPNKTLEKLKRHVKTRNDLLTKIFENYKEKFRSDSITNMLDVLMQAKMNSDNGNAGPDQDSELLSDNHILTTIGDIFGAGVETTTSVVKWIVAFLLHNPQVKKKLYEGIDQNVGFSRTPTISDRNRLLLLEATIREVLRIRPVAPMLIPHKANVDSSIGEFAVDKGTHVIINLWALHHNEKEWHQPDQFMPERFLNPAGTQLISPSLSYLPFGAGPRSCIGEILARQELFLIMAWLLQRFDLEVPDDGQLPSLEGNPKVVFLIDSFKVKIKVRQAWREAQAEGST</sequence>
<comment type="function">
    <text evidence="2 3">A cytochrome P450 monooxygenase involved in corticoid and androgen biosynthesis. Catalyzes 17-alpha hydroxylation of C21 steroids, which is common for both pathways (PubMed:12423360). A second oxidative step, required only for androgen synthesis, involves an acyl-carbon cleavage. Hydroxylates pregnenolone to form 17-alpha pregnenolone, followed by the cleavage of the C17-C20 bond to form dehydroepiandrosterone (DHEA) (PubMed:12423360). Has 17-alpha hydroxylase activity toward progesterone (PubMed:12423360). The 17-alpha hydroxy intermediates, as part of adrenal glucocorticoids biosynthesis pathway, are precursors of cortisol. Mechanistically, uses molecular oxygen inserting one oxygen atom into a substrate, and reducing the second into a water molecule, with two electrons provided by NADPH via cytochrome P450 reductase (CPR; NADPH-ferrihemoprotein reductase) (By similarity).</text>
</comment>
<comment type="catalytic activity">
    <reaction evidence="2">
        <text>a C21-steroid + reduced [NADPH--hemoprotein reductase] + O2 = a 17alpha-hydroxy-C21-steroid + oxidized [NADPH--hemoprotein reductase] + H2O + H(+)</text>
        <dbReference type="Rhea" id="RHEA:65760"/>
        <dbReference type="Rhea" id="RHEA-COMP:11964"/>
        <dbReference type="Rhea" id="RHEA-COMP:11965"/>
        <dbReference type="ChEBI" id="CHEBI:15377"/>
        <dbReference type="ChEBI" id="CHEBI:15378"/>
        <dbReference type="ChEBI" id="CHEBI:15379"/>
        <dbReference type="ChEBI" id="CHEBI:57618"/>
        <dbReference type="ChEBI" id="CHEBI:58210"/>
        <dbReference type="ChEBI" id="CHEBI:61313"/>
        <dbReference type="ChEBI" id="CHEBI:138141"/>
        <dbReference type="EC" id="1.14.14.19"/>
    </reaction>
    <physiologicalReaction direction="left-to-right" evidence="2">
        <dbReference type="Rhea" id="RHEA:65761"/>
    </physiologicalReaction>
</comment>
<comment type="catalytic activity">
    <reaction evidence="2">
        <text>progesterone + reduced [NADPH--hemoprotein reductase] + O2 = 17alpha-hydroxyprogesterone + oxidized [NADPH--hemoprotein reductase] + H2O + H(+)</text>
        <dbReference type="Rhea" id="RHEA:46308"/>
        <dbReference type="Rhea" id="RHEA-COMP:11964"/>
        <dbReference type="Rhea" id="RHEA-COMP:11965"/>
        <dbReference type="ChEBI" id="CHEBI:15377"/>
        <dbReference type="ChEBI" id="CHEBI:15378"/>
        <dbReference type="ChEBI" id="CHEBI:15379"/>
        <dbReference type="ChEBI" id="CHEBI:17026"/>
        <dbReference type="ChEBI" id="CHEBI:17252"/>
        <dbReference type="ChEBI" id="CHEBI:57618"/>
        <dbReference type="ChEBI" id="CHEBI:58210"/>
        <dbReference type="EC" id="1.14.14.19"/>
    </reaction>
    <physiologicalReaction direction="left-to-right" evidence="2">
        <dbReference type="Rhea" id="RHEA:46309"/>
    </physiologicalReaction>
</comment>
<comment type="catalytic activity">
    <reaction evidence="2">
        <text>pregnenolone + reduced [NADPH--hemoprotein reductase] + O2 = 17alpha-hydroxypregnenolone + oxidized [NADPH--hemoprotein reductase] + H2O + H(+)</text>
        <dbReference type="Rhea" id="RHEA:50236"/>
        <dbReference type="Rhea" id="RHEA-COMP:11964"/>
        <dbReference type="Rhea" id="RHEA-COMP:11965"/>
        <dbReference type="ChEBI" id="CHEBI:15377"/>
        <dbReference type="ChEBI" id="CHEBI:15378"/>
        <dbReference type="ChEBI" id="CHEBI:15379"/>
        <dbReference type="ChEBI" id="CHEBI:16581"/>
        <dbReference type="ChEBI" id="CHEBI:28750"/>
        <dbReference type="ChEBI" id="CHEBI:57618"/>
        <dbReference type="ChEBI" id="CHEBI:58210"/>
        <dbReference type="EC" id="1.14.14.19"/>
    </reaction>
    <physiologicalReaction direction="left-to-right" evidence="2">
        <dbReference type="Rhea" id="RHEA:50237"/>
    </physiologicalReaction>
</comment>
<comment type="catalytic activity">
    <reaction evidence="2">
        <text>17alpha-hydroxypregnenolone + reduced [NADPH--hemoprotein reductase] + O2 = 3beta-hydroxyandrost-5-en-17-one + acetate + oxidized [NADPH--hemoprotein reductase] + H2O + 2 H(+)</text>
        <dbReference type="Rhea" id="RHEA:50244"/>
        <dbReference type="Rhea" id="RHEA-COMP:11964"/>
        <dbReference type="Rhea" id="RHEA-COMP:11965"/>
        <dbReference type="ChEBI" id="CHEBI:15377"/>
        <dbReference type="ChEBI" id="CHEBI:15378"/>
        <dbReference type="ChEBI" id="CHEBI:15379"/>
        <dbReference type="ChEBI" id="CHEBI:28689"/>
        <dbReference type="ChEBI" id="CHEBI:28750"/>
        <dbReference type="ChEBI" id="CHEBI:30089"/>
        <dbReference type="ChEBI" id="CHEBI:57618"/>
        <dbReference type="ChEBI" id="CHEBI:58210"/>
        <dbReference type="EC" id="1.14.14.32"/>
    </reaction>
    <physiologicalReaction direction="left-to-right" evidence="2">
        <dbReference type="Rhea" id="RHEA:50245"/>
    </physiologicalReaction>
</comment>
<comment type="cofactor">
    <cofactor evidence="2">
        <name>heme</name>
        <dbReference type="ChEBI" id="CHEBI:30413"/>
    </cofactor>
</comment>
<comment type="activity regulation">
    <text evidence="2">Regulated predominantly by intracellular cAMP levels. The 17,20-lyase activity is stimulated by cytochrome b5, which acts as an allosteric effector increasing the Vmax of the lyase activity.</text>
</comment>
<comment type="pathway">
    <text evidence="2">Steroid hormone biosynthesis.</text>
</comment>
<comment type="pathway">
    <text evidence="2">Steroid biosynthesis; glucocorticoid biosynthesis.</text>
</comment>
<comment type="subcellular location">
    <subcellularLocation>
        <location evidence="2">Endoplasmic reticulum membrane</location>
    </subcellularLocation>
    <subcellularLocation>
        <location evidence="2">Microsome membrane</location>
    </subcellularLocation>
</comment>
<comment type="similarity">
    <text evidence="4">Belongs to the cytochrome P450 family.</text>
</comment>
<evidence type="ECO:0000250" key="1"/>
<evidence type="ECO:0000250" key="2">
    <source>
        <dbReference type="UniProtKB" id="P05093"/>
    </source>
</evidence>
<evidence type="ECO:0000269" key="3">
    <source>
    </source>
</evidence>
<evidence type="ECO:0000305" key="4"/>
<gene>
    <name type="primary">CYP17A1</name>
    <name type="synonym">CYP17</name>
</gene>
<organism>
    <name type="scientific">Papio hamadryas ursinus</name>
    <name type="common">Chacma baboon</name>
    <dbReference type="NCBI Taxonomy" id="36229"/>
    <lineage>
        <taxon>Eukaryota</taxon>
        <taxon>Metazoa</taxon>
        <taxon>Chordata</taxon>
        <taxon>Craniata</taxon>
        <taxon>Vertebrata</taxon>
        <taxon>Euteleostomi</taxon>
        <taxon>Mammalia</taxon>
        <taxon>Eutheria</taxon>
        <taxon>Euarchontoglires</taxon>
        <taxon>Primates</taxon>
        <taxon>Haplorrhini</taxon>
        <taxon>Catarrhini</taxon>
        <taxon>Cercopithecidae</taxon>
        <taxon>Cercopithecinae</taxon>
        <taxon>Papio</taxon>
    </lineage>
</organism>
<keyword id="KW-0256">Endoplasmic reticulum</keyword>
<keyword id="KW-0349">Heme</keyword>
<keyword id="KW-0408">Iron</keyword>
<keyword id="KW-0443">Lipid metabolism</keyword>
<keyword id="KW-0456">Lyase</keyword>
<keyword id="KW-0472">Membrane</keyword>
<keyword id="KW-0479">Metal-binding</keyword>
<keyword id="KW-0492">Microsome</keyword>
<keyword id="KW-0503">Monooxygenase</keyword>
<keyword id="KW-0560">Oxidoreductase</keyword>
<keyword id="KW-0755">Steroidogenesis</keyword>
<feature type="chain" id="PRO_0000051938" description="Steroid 17-alpha-hydroxylase/17,20 lyase">
    <location>
        <begin position="1"/>
        <end position="508"/>
    </location>
</feature>
<feature type="binding site" evidence="2">
    <location>
        <position position="202"/>
    </location>
    <ligand>
        <name>substrate</name>
    </ligand>
</feature>
<feature type="binding site" description="axial binding residue" evidence="1">
    <location>
        <position position="442"/>
    </location>
    <ligand>
        <name>heme</name>
        <dbReference type="ChEBI" id="CHEBI:30413"/>
    </ligand>
    <ligandPart>
        <name>Fe</name>
        <dbReference type="ChEBI" id="CHEBI:18248"/>
    </ligandPart>
</feature>
<feature type="sequence conflict" description="In Ref. 2; AAK57726." evidence="4" ref="2">
    <original>G</original>
    <variation>E</variation>
    <location>
        <position position="331"/>
    </location>
</feature>
<feature type="sequence conflict" description="In Ref. 2; AAK57726." evidence="4" ref="2">
    <original>L</original>
    <variation>R</variation>
    <location>
        <position position="396"/>
    </location>
</feature>
<protein>
    <recommendedName>
        <fullName>Steroid 17-alpha-hydroxylase/17,20 lyase</fullName>
        <ecNumber evidence="3">1.14.14.19</ecNumber>
        <ecNumber evidence="3">1.14.14.32</ecNumber>
    </recommendedName>
    <alternativeName>
        <fullName>CYPXVII</fullName>
    </alternativeName>
    <alternativeName>
        <fullName>Cytochrome P450 17A1</fullName>
    </alternativeName>
    <alternativeName>
        <fullName>Cytochrome P450-C17</fullName>
        <shortName>Cytochrome P450c17</shortName>
    </alternativeName>
    <alternativeName>
        <fullName>Steroid 17-alpha-monooxygenase</fullName>
    </alternativeName>
</protein>
<accession>Q9GLD2</accession>
<accession>Q95M62</accession>
<proteinExistence type="evidence at protein level"/>
<reference key="1">
    <citation type="submission" date="2000-08" db="EMBL/GenBank/DDBJ databases">
        <title>Cloning and expression of baboon cytochrome P-450 17-alpha hydroxylase/c17-20 lyase.</title>
        <authorList>
            <person name="Swart A.C."/>
            <person name="Kolar N.W."/>
            <person name="Swart P."/>
        </authorList>
    </citation>
    <scope>NUCLEOTIDE SEQUENCE</scope>
    <source>
        <tissue>Adrenal gland</tissue>
    </source>
</reference>
<reference key="2">
    <citation type="journal article" date="2002" name="Eur. J. Biochem.">
        <title>Baboon cytochrome P450 17alpha-hydroxylase/17,20-lyase (CYP17).</title>
        <authorList>
            <person name="Swart A.C."/>
            <person name="Kolar N.W."/>
            <person name="Lombard N."/>
            <person name="Mason J.I."/>
            <person name="Swart P."/>
        </authorList>
    </citation>
    <scope>NUCLEOTIDE SEQUENCE [GENOMIC DNA]</scope>
    <scope>FUNCTION</scope>
    <scope>CATALYTIC ACTIVITY</scope>
</reference>
<dbReference type="EC" id="1.14.14.19" evidence="3"/>
<dbReference type="EC" id="1.14.14.32" evidence="3"/>
<dbReference type="EMBL" id="AF297650">
    <property type="protein sequence ID" value="AAG10599.1"/>
    <property type="molecule type" value="mRNA"/>
</dbReference>
<dbReference type="EMBL" id="AY034635">
    <property type="protein sequence ID" value="AAK57726.1"/>
    <property type="molecule type" value="Genomic_DNA"/>
</dbReference>
<dbReference type="SMR" id="Q9GLD2"/>
<dbReference type="BRENDA" id="1.14.14.19">
    <property type="organism ID" value="4524"/>
</dbReference>
<dbReference type="UniPathway" id="UPA00788"/>
<dbReference type="GO" id="GO:0005789">
    <property type="term" value="C:endoplasmic reticulum membrane"/>
    <property type="evidence" value="ECO:0007669"/>
    <property type="project" value="UniProtKB-SubCell"/>
</dbReference>
<dbReference type="GO" id="GO:0020037">
    <property type="term" value="F:heme binding"/>
    <property type="evidence" value="ECO:0000250"/>
    <property type="project" value="UniProtKB"/>
</dbReference>
<dbReference type="GO" id="GO:0005506">
    <property type="term" value="F:iron ion binding"/>
    <property type="evidence" value="ECO:0007669"/>
    <property type="project" value="InterPro"/>
</dbReference>
<dbReference type="GO" id="GO:0016829">
    <property type="term" value="F:lyase activity"/>
    <property type="evidence" value="ECO:0007669"/>
    <property type="project" value="UniProtKB-KW"/>
</dbReference>
<dbReference type="GO" id="GO:0004508">
    <property type="term" value="F:steroid 17-alpha-monooxygenase activity"/>
    <property type="evidence" value="ECO:0000250"/>
    <property type="project" value="UniProtKB"/>
</dbReference>
<dbReference type="GO" id="GO:0006704">
    <property type="term" value="P:glucocorticoid biosynthetic process"/>
    <property type="evidence" value="ECO:0007669"/>
    <property type="project" value="UniProtKB-UniPathway"/>
</dbReference>
<dbReference type="GO" id="GO:0042446">
    <property type="term" value="P:hormone biosynthetic process"/>
    <property type="evidence" value="ECO:0000250"/>
    <property type="project" value="UniProtKB"/>
</dbReference>
<dbReference type="GO" id="GO:0042448">
    <property type="term" value="P:progesterone metabolic process"/>
    <property type="evidence" value="ECO:0000250"/>
    <property type="project" value="UniProtKB"/>
</dbReference>
<dbReference type="GO" id="GO:0008202">
    <property type="term" value="P:steroid metabolic process"/>
    <property type="evidence" value="ECO:0000250"/>
    <property type="project" value="UniProtKB"/>
</dbReference>
<dbReference type="CDD" id="cd20673">
    <property type="entry name" value="CYP17A1"/>
    <property type="match status" value="1"/>
</dbReference>
<dbReference type="FunFam" id="1.10.630.10:FF:000002">
    <property type="entry name" value="Cytochrome P450 1A1"/>
    <property type="match status" value="1"/>
</dbReference>
<dbReference type="Gene3D" id="1.10.630.10">
    <property type="entry name" value="Cytochrome P450"/>
    <property type="match status" value="1"/>
</dbReference>
<dbReference type="InterPro" id="IPR001128">
    <property type="entry name" value="Cyt_P450"/>
</dbReference>
<dbReference type="InterPro" id="IPR017972">
    <property type="entry name" value="Cyt_P450_CS"/>
</dbReference>
<dbReference type="InterPro" id="IPR002401">
    <property type="entry name" value="Cyt_P450_E_grp-I"/>
</dbReference>
<dbReference type="InterPro" id="IPR036396">
    <property type="entry name" value="Cyt_P450_sf"/>
</dbReference>
<dbReference type="PANTHER" id="PTHR24289">
    <property type="entry name" value="STEROID 17-ALPHA-HYDROXYLASE/17,20 LYASE"/>
    <property type="match status" value="1"/>
</dbReference>
<dbReference type="PANTHER" id="PTHR24289:SF13">
    <property type="entry name" value="STEROID 17-ALPHA-HYDROXYLASE_17,20 LYASE"/>
    <property type="match status" value="1"/>
</dbReference>
<dbReference type="Pfam" id="PF00067">
    <property type="entry name" value="p450"/>
    <property type="match status" value="1"/>
</dbReference>
<dbReference type="PRINTS" id="PR00463">
    <property type="entry name" value="EP450I"/>
</dbReference>
<dbReference type="PRINTS" id="PR00385">
    <property type="entry name" value="P450"/>
</dbReference>
<dbReference type="SUPFAM" id="SSF48264">
    <property type="entry name" value="Cytochrome P450"/>
    <property type="match status" value="1"/>
</dbReference>
<dbReference type="PROSITE" id="PS00086">
    <property type="entry name" value="CYTOCHROME_P450"/>
    <property type="match status" value="1"/>
</dbReference>
<name>CP17A_PAPHU</name>